<evidence type="ECO:0000255" key="1">
    <source>
        <dbReference type="HAMAP-Rule" id="MF_03191"/>
    </source>
</evidence>
<gene>
    <name evidence="1" type="primary">coq5</name>
    <name type="ORF">zgc:92445</name>
</gene>
<reference key="1">
    <citation type="submission" date="2004-07" db="EMBL/GenBank/DDBJ databases">
        <authorList>
            <consortium name="NIH - Zebrafish Gene Collection (ZGC) project"/>
        </authorList>
    </citation>
    <scope>NUCLEOTIDE SEQUENCE [LARGE SCALE MRNA]</scope>
</reference>
<accession>Q66L51</accession>
<feature type="transit peptide" description="Mitochondrion" evidence="1">
    <location>
        <begin position="1"/>
        <end position="43"/>
    </location>
</feature>
<feature type="chain" id="PRO_0000228633" description="2-methoxy-6-polyprenyl-1,4-benzoquinol methylase, mitochondrial">
    <location>
        <begin position="44"/>
        <end position="327"/>
    </location>
</feature>
<feature type="binding site" evidence="1">
    <location>
        <position position="117"/>
    </location>
    <ligand>
        <name>S-adenosyl-L-methionine</name>
        <dbReference type="ChEBI" id="CHEBI:59789"/>
    </ligand>
</feature>
<feature type="binding site" evidence="1">
    <location>
        <position position="171"/>
    </location>
    <ligand>
        <name>S-adenosyl-L-methionine</name>
        <dbReference type="ChEBI" id="CHEBI:59789"/>
    </ligand>
</feature>
<feature type="binding site" evidence="1">
    <location>
        <begin position="199"/>
        <end position="200"/>
    </location>
    <ligand>
        <name>S-adenosyl-L-methionine</name>
        <dbReference type="ChEBI" id="CHEBI:59789"/>
    </ligand>
</feature>
<protein>
    <recommendedName>
        <fullName evidence="1">2-methoxy-6-polyprenyl-1,4-benzoquinol methylase, mitochondrial</fullName>
        <ecNumber evidence="1">2.1.1.201</ecNumber>
    </recommendedName>
    <alternativeName>
        <fullName evidence="1">Ubiquinone biosynthesis methyltransferase COQ5</fullName>
    </alternativeName>
</protein>
<dbReference type="EC" id="2.1.1.201" evidence="1"/>
<dbReference type="EMBL" id="BC078433">
    <property type="protein sequence ID" value="AAH78433.1"/>
    <property type="molecule type" value="mRNA"/>
</dbReference>
<dbReference type="RefSeq" id="NP_001004541.1">
    <property type="nucleotide sequence ID" value="NM_001004541.1"/>
</dbReference>
<dbReference type="SMR" id="Q66L51"/>
<dbReference type="FunCoup" id="Q66L51">
    <property type="interactions" value="1689"/>
</dbReference>
<dbReference type="STRING" id="7955.ENSDARP00000051643"/>
<dbReference type="PaxDb" id="7955-ENSDARP00000051643"/>
<dbReference type="GeneID" id="447802"/>
<dbReference type="KEGG" id="dre:447802"/>
<dbReference type="AGR" id="ZFIN:ZDB-GENE-040912-5"/>
<dbReference type="CTD" id="84274"/>
<dbReference type="ZFIN" id="ZDB-GENE-040912-5">
    <property type="gene designation" value="coq5"/>
</dbReference>
<dbReference type="eggNOG" id="KOG1540">
    <property type="taxonomic scope" value="Eukaryota"/>
</dbReference>
<dbReference type="InParanoid" id="Q66L51"/>
<dbReference type="OrthoDB" id="6329284at2759"/>
<dbReference type="PhylomeDB" id="Q66L51"/>
<dbReference type="Reactome" id="R-DRE-2142789">
    <property type="pathway name" value="Ubiquinol biosynthesis"/>
</dbReference>
<dbReference type="UniPathway" id="UPA00232"/>
<dbReference type="PRO" id="PR:Q66L51"/>
<dbReference type="Proteomes" id="UP000000437">
    <property type="component" value="Chromosome 5"/>
</dbReference>
<dbReference type="GO" id="GO:0031314">
    <property type="term" value="C:extrinsic component of mitochondrial inner membrane"/>
    <property type="evidence" value="ECO:0007669"/>
    <property type="project" value="UniProtKB-UniRule"/>
</dbReference>
<dbReference type="GO" id="GO:0008425">
    <property type="term" value="F:2-methoxy-6-polyprenyl-1,4-benzoquinol methyltransferase activity"/>
    <property type="evidence" value="ECO:0000250"/>
    <property type="project" value="UniProtKB"/>
</dbReference>
<dbReference type="GO" id="GO:0032259">
    <property type="term" value="P:methylation"/>
    <property type="evidence" value="ECO:0007669"/>
    <property type="project" value="UniProtKB-KW"/>
</dbReference>
<dbReference type="GO" id="GO:0006744">
    <property type="term" value="P:ubiquinone biosynthetic process"/>
    <property type="evidence" value="ECO:0000250"/>
    <property type="project" value="UniProtKB"/>
</dbReference>
<dbReference type="CDD" id="cd02440">
    <property type="entry name" value="AdoMet_MTases"/>
    <property type="match status" value="1"/>
</dbReference>
<dbReference type="FunFam" id="3.40.50.150:FF:000064">
    <property type="entry name" value="2-methoxy-6-polyprenyl-1,4-benzoquinol methylase, mitochondrial"/>
    <property type="match status" value="1"/>
</dbReference>
<dbReference type="Gene3D" id="3.40.50.150">
    <property type="entry name" value="Vaccinia Virus protein VP39"/>
    <property type="match status" value="1"/>
</dbReference>
<dbReference type="HAMAP" id="MF_01813">
    <property type="entry name" value="MenG_UbiE_methyltr"/>
    <property type="match status" value="1"/>
</dbReference>
<dbReference type="InterPro" id="IPR029063">
    <property type="entry name" value="SAM-dependent_MTases_sf"/>
</dbReference>
<dbReference type="InterPro" id="IPR004033">
    <property type="entry name" value="UbiE/COQ5_MeTrFase"/>
</dbReference>
<dbReference type="InterPro" id="IPR023576">
    <property type="entry name" value="UbiE/COQ5_MeTrFase_CS"/>
</dbReference>
<dbReference type="NCBIfam" id="TIGR01934">
    <property type="entry name" value="MenG_MenH_UbiE"/>
    <property type="match status" value="1"/>
</dbReference>
<dbReference type="PANTHER" id="PTHR43591:SF24">
    <property type="entry name" value="2-METHOXY-6-POLYPRENYL-1,4-BENZOQUINOL METHYLASE, MITOCHONDRIAL"/>
    <property type="match status" value="1"/>
</dbReference>
<dbReference type="PANTHER" id="PTHR43591">
    <property type="entry name" value="METHYLTRANSFERASE"/>
    <property type="match status" value="1"/>
</dbReference>
<dbReference type="Pfam" id="PF01209">
    <property type="entry name" value="Ubie_methyltran"/>
    <property type="match status" value="1"/>
</dbReference>
<dbReference type="SUPFAM" id="SSF53335">
    <property type="entry name" value="S-adenosyl-L-methionine-dependent methyltransferases"/>
    <property type="match status" value="1"/>
</dbReference>
<dbReference type="PROSITE" id="PS51608">
    <property type="entry name" value="SAM_MT_UBIE"/>
    <property type="match status" value="1"/>
</dbReference>
<dbReference type="PROSITE" id="PS01183">
    <property type="entry name" value="UBIE_1"/>
    <property type="match status" value="1"/>
</dbReference>
<dbReference type="PROSITE" id="PS01184">
    <property type="entry name" value="UBIE_2"/>
    <property type="match status" value="1"/>
</dbReference>
<sequence length="327" mass="37351">MAAPIRAFVLRVLSDSTRNIHHVLRCRSKYLCRRAAITARRGYSDSTEGRSTHFGFQTVPEEEKAEKVYKVFESVAKKYDVMNDAMSLGIHRLWKDTLLHIMNPQPGLRLLDTAGGTGDISFRFLEYTRSMYDRQQRLRAKSQQTPSWKDIAGHYVSDEEGPPQSRAVVCDINKEMLKVGKQRAEDAGITTGLSWVAGDAEELPFDDDQFDMYTIAFGIRNVTHIEQALQEAFRVLKPGGRFMCLEFSKVTNPLLARLYDAYSFQMIPVLGEVIAGDWKSYQYLVESIRKFPDQEIFKEMIEDAGFFRVQYFNLTGGIVAIHSGFKL</sequence>
<proteinExistence type="evidence at transcript level"/>
<comment type="function">
    <text evidence="1">Methyltransferase required for the conversion of 2-polyprenyl-6-methoxy-1,4-benzoquinol (DDMQH2) to 2-polyprenyl-3-methyl-6-methoxy-1,4-benzoquinol (DMQH2).</text>
</comment>
<comment type="catalytic activity">
    <reaction evidence="1">
        <text>a 2-methoxy-6-(all-trans-polyprenyl)benzene-1,4-diol + S-adenosyl-L-methionine = a 5-methoxy-2-methyl-3-(all-trans-polyprenyl)benzene-1,4-diol + S-adenosyl-L-homocysteine + H(+)</text>
        <dbReference type="Rhea" id="RHEA:28286"/>
        <dbReference type="Rhea" id="RHEA-COMP:10858"/>
        <dbReference type="Rhea" id="RHEA-COMP:10859"/>
        <dbReference type="ChEBI" id="CHEBI:15378"/>
        <dbReference type="ChEBI" id="CHEBI:57856"/>
        <dbReference type="ChEBI" id="CHEBI:59789"/>
        <dbReference type="ChEBI" id="CHEBI:84166"/>
        <dbReference type="ChEBI" id="CHEBI:84167"/>
        <dbReference type="EC" id="2.1.1.201"/>
    </reaction>
</comment>
<comment type="pathway">
    <text evidence="1">Cofactor biosynthesis; ubiquinone biosynthesis.</text>
</comment>
<comment type="subunit">
    <text evidence="1">Component of a multi-subunit COQ enzyme complex, composed of at least coq3, coq4, coq5, coq6, coq7 and coq9.</text>
</comment>
<comment type="subcellular location">
    <subcellularLocation>
        <location evidence="1">Mitochondrion inner membrane</location>
        <topology evidence="1">Peripheral membrane protein</topology>
        <orientation evidence="1">Matrix side</orientation>
    </subcellularLocation>
</comment>
<comment type="similarity">
    <text evidence="1">Belongs to the class I-like SAM-binding methyltransferase superfamily. MenG/UbiE family.</text>
</comment>
<name>COQ5_DANRE</name>
<organism>
    <name type="scientific">Danio rerio</name>
    <name type="common">Zebrafish</name>
    <name type="synonym">Brachydanio rerio</name>
    <dbReference type="NCBI Taxonomy" id="7955"/>
    <lineage>
        <taxon>Eukaryota</taxon>
        <taxon>Metazoa</taxon>
        <taxon>Chordata</taxon>
        <taxon>Craniata</taxon>
        <taxon>Vertebrata</taxon>
        <taxon>Euteleostomi</taxon>
        <taxon>Actinopterygii</taxon>
        <taxon>Neopterygii</taxon>
        <taxon>Teleostei</taxon>
        <taxon>Ostariophysi</taxon>
        <taxon>Cypriniformes</taxon>
        <taxon>Danionidae</taxon>
        <taxon>Danioninae</taxon>
        <taxon>Danio</taxon>
    </lineage>
</organism>
<keyword id="KW-0472">Membrane</keyword>
<keyword id="KW-0489">Methyltransferase</keyword>
<keyword id="KW-0496">Mitochondrion</keyword>
<keyword id="KW-0999">Mitochondrion inner membrane</keyword>
<keyword id="KW-1185">Reference proteome</keyword>
<keyword id="KW-0949">S-adenosyl-L-methionine</keyword>
<keyword id="KW-0808">Transferase</keyword>
<keyword id="KW-0809">Transit peptide</keyword>
<keyword id="KW-0831">Ubiquinone biosynthesis</keyword>